<proteinExistence type="inferred from homology"/>
<feature type="chain" id="PRO_0000189725" description="Gamma-glutamyl phosphate reductase">
    <location>
        <begin position="1"/>
        <end position="417"/>
    </location>
</feature>
<comment type="function">
    <text evidence="1">Catalyzes the NADPH-dependent reduction of L-glutamate 5-phosphate into L-glutamate 5-semialdehyde and phosphate. The product spontaneously undergoes cyclization to form 1-pyrroline-5-carboxylate.</text>
</comment>
<comment type="catalytic activity">
    <reaction evidence="1">
        <text>L-glutamate 5-semialdehyde + phosphate + NADP(+) = L-glutamyl 5-phosphate + NADPH + H(+)</text>
        <dbReference type="Rhea" id="RHEA:19541"/>
        <dbReference type="ChEBI" id="CHEBI:15378"/>
        <dbReference type="ChEBI" id="CHEBI:43474"/>
        <dbReference type="ChEBI" id="CHEBI:57783"/>
        <dbReference type="ChEBI" id="CHEBI:58066"/>
        <dbReference type="ChEBI" id="CHEBI:58274"/>
        <dbReference type="ChEBI" id="CHEBI:58349"/>
        <dbReference type="EC" id="1.2.1.41"/>
    </reaction>
</comment>
<comment type="pathway">
    <text evidence="1">Amino-acid biosynthesis; L-proline biosynthesis; L-glutamate 5-semialdehyde from L-glutamate: step 2/2.</text>
</comment>
<comment type="subcellular location">
    <subcellularLocation>
        <location evidence="1">Cytoplasm</location>
    </subcellularLocation>
</comment>
<comment type="similarity">
    <text evidence="1">Belongs to the gamma-glutamyl phosphate reductase family.</text>
</comment>
<sequence>MLEQMGIAAKQASYKLAQLSSREKNRVLEKIADELEAQSEIILNANAQDVADARANGLSEAMLDRLALTPARLKGIADDVRQVCNLADPVGQVIDGGVLDSGLRLERRRVPLGVIGVIYEARPNVTVDVASLCLKTGNAVILRGGKETCRTNAATVVVIQDALKSCGLPAGAVQAIDNPDRALVSEMLRMDKYIDMLIPRGGAGLHKLCREQSTIPVITGGIGVCHIYVDESAEIAEALKVIVNAKTQRPSTCNTVETLLVNKNIAYSFLPALSKQMAESGVTLHADASALAQLQTGPAKVVAVKAEEYDDEFLSLDLNVKIVSDLDDAIAHIREHGTQHSDAILTRDMRNAQRFVNEVDSSAVYVNASTRFTDGGQFGLGAEVAVSTQKLHARGPMGLEALTTYKWIGIGDYTIRA</sequence>
<organism>
    <name type="scientific">Escherichia coli O157:H7</name>
    <dbReference type="NCBI Taxonomy" id="83334"/>
    <lineage>
        <taxon>Bacteria</taxon>
        <taxon>Pseudomonadati</taxon>
        <taxon>Pseudomonadota</taxon>
        <taxon>Gammaproteobacteria</taxon>
        <taxon>Enterobacterales</taxon>
        <taxon>Enterobacteriaceae</taxon>
        <taxon>Escherichia</taxon>
    </lineage>
</organism>
<reference key="1">
    <citation type="journal article" date="2001" name="Nature">
        <title>Genome sequence of enterohaemorrhagic Escherichia coli O157:H7.</title>
        <authorList>
            <person name="Perna N.T."/>
            <person name="Plunkett G. III"/>
            <person name="Burland V."/>
            <person name="Mau B."/>
            <person name="Glasner J.D."/>
            <person name="Rose D.J."/>
            <person name="Mayhew G.F."/>
            <person name="Evans P.S."/>
            <person name="Gregor J."/>
            <person name="Kirkpatrick H.A."/>
            <person name="Posfai G."/>
            <person name="Hackett J."/>
            <person name="Klink S."/>
            <person name="Boutin A."/>
            <person name="Shao Y."/>
            <person name="Miller L."/>
            <person name="Grotbeck E.J."/>
            <person name="Davis N.W."/>
            <person name="Lim A."/>
            <person name="Dimalanta E.T."/>
            <person name="Potamousis K."/>
            <person name="Apodaca J."/>
            <person name="Anantharaman T.S."/>
            <person name="Lin J."/>
            <person name="Yen G."/>
            <person name="Schwartz D.C."/>
            <person name="Welch R.A."/>
            <person name="Blattner F.R."/>
        </authorList>
    </citation>
    <scope>NUCLEOTIDE SEQUENCE [LARGE SCALE GENOMIC DNA]</scope>
    <source>
        <strain>O157:H7 / EDL933 / ATCC 700927 / EHEC</strain>
    </source>
</reference>
<reference key="2">
    <citation type="journal article" date="2001" name="DNA Res.">
        <title>Complete genome sequence of enterohemorrhagic Escherichia coli O157:H7 and genomic comparison with a laboratory strain K-12.</title>
        <authorList>
            <person name="Hayashi T."/>
            <person name="Makino K."/>
            <person name="Ohnishi M."/>
            <person name="Kurokawa K."/>
            <person name="Ishii K."/>
            <person name="Yokoyama K."/>
            <person name="Han C.-G."/>
            <person name="Ohtsubo E."/>
            <person name="Nakayama K."/>
            <person name="Murata T."/>
            <person name="Tanaka M."/>
            <person name="Tobe T."/>
            <person name="Iida T."/>
            <person name="Takami H."/>
            <person name="Honda T."/>
            <person name="Sasakawa C."/>
            <person name="Ogasawara N."/>
            <person name="Yasunaga T."/>
            <person name="Kuhara S."/>
            <person name="Shiba T."/>
            <person name="Hattori M."/>
            <person name="Shinagawa H."/>
        </authorList>
    </citation>
    <scope>NUCLEOTIDE SEQUENCE [LARGE SCALE GENOMIC DNA]</scope>
    <source>
        <strain>O157:H7 / Sakai / RIMD 0509952 / EHEC</strain>
    </source>
</reference>
<evidence type="ECO:0000255" key="1">
    <source>
        <dbReference type="HAMAP-Rule" id="MF_00412"/>
    </source>
</evidence>
<gene>
    <name evidence="1" type="primary">proA</name>
    <name type="ordered locus">Z0304</name>
    <name type="ordered locus">ECs0270</name>
</gene>
<keyword id="KW-0028">Amino-acid biosynthesis</keyword>
<keyword id="KW-0963">Cytoplasm</keyword>
<keyword id="KW-0521">NADP</keyword>
<keyword id="KW-0560">Oxidoreductase</keyword>
<keyword id="KW-0641">Proline biosynthesis</keyword>
<keyword id="KW-1185">Reference proteome</keyword>
<protein>
    <recommendedName>
        <fullName evidence="1">Gamma-glutamyl phosphate reductase</fullName>
        <shortName evidence="1">GPR</shortName>
        <ecNumber evidence="1">1.2.1.41</ecNumber>
    </recommendedName>
    <alternativeName>
        <fullName evidence="1">Glutamate-5-semialdehyde dehydrogenase</fullName>
    </alternativeName>
    <alternativeName>
        <fullName evidence="1">Glutamyl-gamma-semialdehyde dehydrogenase</fullName>
        <shortName evidence="1">GSA dehydrogenase</shortName>
    </alternativeName>
</protein>
<dbReference type="EC" id="1.2.1.41" evidence="1"/>
<dbReference type="EMBL" id="AE005174">
    <property type="protein sequence ID" value="AAG54568.1"/>
    <property type="molecule type" value="Genomic_DNA"/>
</dbReference>
<dbReference type="EMBL" id="BA000007">
    <property type="protein sequence ID" value="BAB33693.1"/>
    <property type="molecule type" value="Genomic_DNA"/>
</dbReference>
<dbReference type="PIR" id="D85513">
    <property type="entry name" value="D85513"/>
</dbReference>
<dbReference type="PIR" id="F90662">
    <property type="entry name" value="F90662"/>
</dbReference>
<dbReference type="RefSeq" id="NP_308297.1">
    <property type="nucleotide sequence ID" value="NC_002695.1"/>
</dbReference>
<dbReference type="RefSeq" id="WP_000893282.1">
    <property type="nucleotide sequence ID" value="NZ_VOAI01000020.1"/>
</dbReference>
<dbReference type="SMR" id="Q8X7N4"/>
<dbReference type="STRING" id="155864.Z0304"/>
<dbReference type="GeneID" id="914368"/>
<dbReference type="KEGG" id="ece:Z0304"/>
<dbReference type="KEGG" id="ecs:ECs_0270"/>
<dbReference type="PATRIC" id="fig|386585.9.peg.372"/>
<dbReference type="eggNOG" id="COG0014">
    <property type="taxonomic scope" value="Bacteria"/>
</dbReference>
<dbReference type="HOGENOM" id="CLU_030231_0_0_6"/>
<dbReference type="OMA" id="KTQRYGT"/>
<dbReference type="UniPathway" id="UPA00098">
    <property type="reaction ID" value="UER00360"/>
</dbReference>
<dbReference type="Proteomes" id="UP000000558">
    <property type="component" value="Chromosome"/>
</dbReference>
<dbReference type="Proteomes" id="UP000002519">
    <property type="component" value="Chromosome"/>
</dbReference>
<dbReference type="GO" id="GO:0005737">
    <property type="term" value="C:cytoplasm"/>
    <property type="evidence" value="ECO:0007669"/>
    <property type="project" value="UniProtKB-SubCell"/>
</dbReference>
<dbReference type="GO" id="GO:0004350">
    <property type="term" value="F:glutamate-5-semialdehyde dehydrogenase activity"/>
    <property type="evidence" value="ECO:0007669"/>
    <property type="project" value="UniProtKB-UniRule"/>
</dbReference>
<dbReference type="GO" id="GO:0050661">
    <property type="term" value="F:NADP binding"/>
    <property type="evidence" value="ECO:0007669"/>
    <property type="project" value="InterPro"/>
</dbReference>
<dbReference type="GO" id="GO:0055129">
    <property type="term" value="P:L-proline biosynthetic process"/>
    <property type="evidence" value="ECO:0007669"/>
    <property type="project" value="UniProtKB-UniRule"/>
</dbReference>
<dbReference type="CDD" id="cd07079">
    <property type="entry name" value="ALDH_F18-19_ProA-GPR"/>
    <property type="match status" value="1"/>
</dbReference>
<dbReference type="FunFam" id="3.40.309.10:FF:000006">
    <property type="entry name" value="Gamma-glutamyl phosphate reductase"/>
    <property type="match status" value="1"/>
</dbReference>
<dbReference type="Gene3D" id="3.40.605.10">
    <property type="entry name" value="Aldehyde Dehydrogenase, Chain A, domain 1"/>
    <property type="match status" value="1"/>
</dbReference>
<dbReference type="Gene3D" id="3.40.309.10">
    <property type="entry name" value="Aldehyde Dehydrogenase, Chain A, domain 2"/>
    <property type="match status" value="1"/>
</dbReference>
<dbReference type="HAMAP" id="MF_00412">
    <property type="entry name" value="ProA"/>
    <property type="match status" value="1"/>
</dbReference>
<dbReference type="InterPro" id="IPR016161">
    <property type="entry name" value="Ald_DH/histidinol_DH"/>
</dbReference>
<dbReference type="InterPro" id="IPR016163">
    <property type="entry name" value="Ald_DH_C"/>
</dbReference>
<dbReference type="InterPro" id="IPR016162">
    <property type="entry name" value="Ald_DH_N"/>
</dbReference>
<dbReference type="InterPro" id="IPR015590">
    <property type="entry name" value="Aldehyde_DH_dom"/>
</dbReference>
<dbReference type="InterPro" id="IPR020593">
    <property type="entry name" value="G-glutamylP_reductase_CS"/>
</dbReference>
<dbReference type="InterPro" id="IPR012134">
    <property type="entry name" value="Glu-5-SA_DH"/>
</dbReference>
<dbReference type="InterPro" id="IPR000965">
    <property type="entry name" value="GPR_dom"/>
</dbReference>
<dbReference type="NCBIfam" id="NF001221">
    <property type="entry name" value="PRK00197.1"/>
    <property type="match status" value="1"/>
</dbReference>
<dbReference type="NCBIfam" id="TIGR00407">
    <property type="entry name" value="proA"/>
    <property type="match status" value="1"/>
</dbReference>
<dbReference type="PANTHER" id="PTHR11063:SF8">
    <property type="entry name" value="DELTA-1-PYRROLINE-5-CARBOXYLATE SYNTHASE"/>
    <property type="match status" value="1"/>
</dbReference>
<dbReference type="PANTHER" id="PTHR11063">
    <property type="entry name" value="GLUTAMATE SEMIALDEHYDE DEHYDROGENASE"/>
    <property type="match status" value="1"/>
</dbReference>
<dbReference type="Pfam" id="PF00171">
    <property type="entry name" value="Aldedh"/>
    <property type="match status" value="1"/>
</dbReference>
<dbReference type="PIRSF" id="PIRSF000151">
    <property type="entry name" value="GPR"/>
    <property type="match status" value="1"/>
</dbReference>
<dbReference type="SUPFAM" id="SSF53720">
    <property type="entry name" value="ALDH-like"/>
    <property type="match status" value="1"/>
</dbReference>
<dbReference type="PROSITE" id="PS01223">
    <property type="entry name" value="PROA"/>
    <property type="match status" value="1"/>
</dbReference>
<name>PROA_ECO57</name>
<accession>Q8X7N4</accession>